<feature type="chain" id="PRO_1000118918" description="CinA-like protein">
    <location>
        <begin position="1"/>
        <end position="416"/>
    </location>
</feature>
<accession>B7JYM6</accession>
<organism>
    <name type="scientific">Rippkaea orientalis (strain PCC 8801 / RF-1)</name>
    <name type="common">Cyanothece sp. (strain PCC 8801)</name>
    <dbReference type="NCBI Taxonomy" id="41431"/>
    <lineage>
        <taxon>Bacteria</taxon>
        <taxon>Bacillati</taxon>
        <taxon>Cyanobacteriota</taxon>
        <taxon>Cyanophyceae</taxon>
        <taxon>Oscillatoriophycideae</taxon>
        <taxon>Chroococcales</taxon>
        <taxon>Aphanothecaceae</taxon>
        <taxon>Rippkaea</taxon>
        <taxon>Rippkaea orientalis</taxon>
    </lineage>
</organism>
<reference key="1">
    <citation type="journal article" date="2011" name="MBio">
        <title>Novel metabolic attributes of the genus Cyanothece, comprising a group of unicellular nitrogen-fixing Cyanobacteria.</title>
        <authorList>
            <person name="Bandyopadhyay A."/>
            <person name="Elvitigala T."/>
            <person name="Welsh E."/>
            <person name="Stockel J."/>
            <person name="Liberton M."/>
            <person name="Min H."/>
            <person name="Sherman L.A."/>
            <person name="Pakrasi H.B."/>
        </authorList>
    </citation>
    <scope>NUCLEOTIDE SEQUENCE [LARGE SCALE GENOMIC DNA]</scope>
    <source>
        <strain>PCC 8801 / RF-1</strain>
    </source>
</reference>
<name>CINAL_RIPO1</name>
<evidence type="ECO:0000255" key="1">
    <source>
        <dbReference type="HAMAP-Rule" id="MF_00226"/>
    </source>
</evidence>
<protein>
    <recommendedName>
        <fullName evidence="1">CinA-like protein</fullName>
    </recommendedName>
</protein>
<comment type="similarity">
    <text evidence="1">Belongs to the CinA family.</text>
</comment>
<dbReference type="EMBL" id="CP001287">
    <property type="protein sequence ID" value="ACK64896.1"/>
    <property type="molecule type" value="Genomic_DNA"/>
</dbReference>
<dbReference type="RefSeq" id="WP_012594172.1">
    <property type="nucleotide sequence ID" value="NC_011726.1"/>
</dbReference>
<dbReference type="SMR" id="B7JYM6"/>
<dbReference type="STRING" id="41431.PCC8801_0814"/>
<dbReference type="KEGG" id="cyp:PCC8801_0814"/>
<dbReference type="eggNOG" id="COG1058">
    <property type="taxonomic scope" value="Bacteria"/>
</dbReference>
<dbReference type="eggNOG" id="COG1546">
    <property type="taxonomic scope" value="Bacteria"/>
</dbReference>
<dbReference type="HOGENOM" id="CLU_030805_9_3_3"/>
<dbReference type="OrthoDB" id="9801454at2"/>
<dbReference type="Proteomes" id="UP000008204">
    <property type="component" value="Chromosome"/>
</dbReference>
<dbReference type="CDD" id="cd00885">
    <property type="entry name" value="cinA"/>
    <property type="match status" value="1"/>
</dbReference>
<dbReference type="Gene3D" id="3.30.70.2860">
    <property type="match status" value="1"/>
</dbReference>
<dbReference type="Gene3D" id="3.90.950.20">
    <property type="entry name" value="CinA-like"/>
    <property type="match status" value="1"/>
</dbReference>
<dbReference type="Gene3D" id="3.40.980.10">
    <property type="entry name" value="MoaB/Mog-like domain"/>
    <property type="match status" value="1"/>
</dbReference>
<dbReference type="HAMAP" id="MF_00226_B">
    <property type="entry name" value="CinA_B"/>
    <property type="match status" value="1"/>
</dbReference>
<dbReference type="InterPro" id="IPR050101">
    <property type="entry name" value="CinA"/>
</dbReference>
<dbReference type="InterPro" id="IPR036653">
    <property type="entry name" value="CinA-like_C"/>
</dbReference>
<dbReference type="InterPro" id="IPR008136">
    <property type="entry name" value="CinA_C"/>
</dbReference>
<dbReference type="InterPro" id="IPR041424">
    <property type="entry name" value="CinA_KH"/>
</dbReference>
<dbReference type="InterPro" id="IPR008135">
    <property type="entry name" value="Competence-induced_CinA"/>
</dbReference>
<dbReference type="InterPro" id="IPR036425">
    <property type="entry name" value="MoaB/Mog-like_dom_sf"/>
</dbReference>
<dbReference type="InterPro" id="IPR001453">
    <property type="entry name" value="MoaB/Mog_dom"/>
</dbReference>
<dbReference type="NCBIfam" id="TIGR00200">
    <property type="entry name" value="cinA_nterm"/>
    <property type="match status" value="1"/>
</dbReference>
<dbReference type="NCBIfam" id="TIGR00177">
    <property type="entry name" value="molyb_syn"/>
    <property type="match status" value="1"/>
</dbReference>
<dbReference type="NCBIfam" id="TIGR00199">
    <property type="entry name" value="PncC_domain"/>
    <property type="match status" value="1"/>
</dbReference>
<dbReference type="NCBIfam" id="NF001813">
    <property type="entry name" value="PRK00549.1"/>
    <property type="match status" value="1"/>
</dbReference>
<dbReference type="PANTHER" id="PTHR13939">
    <property type="entry name" value="NICOTINAMIDE-NUCLEOTIDE AMIDOHYDROLASE PNCC"/>
    <property type="match status" value="1"/>
</dbReference>
<dbReference type="PANTHER" id="PTHR13939:SF0">
    <property type="entry name" value="NMN AMIDOHYDROLASE-LIKE PROTEIN YFAY"/>
    <property type="match status" value="1"/>
</dbReference>
<dbReference type="Pfam" id="PF02464">
    <property type="entry name" value="CinA"/>
    <property type="match status" value="1"/>
</dbReference>
<dbReference type="Pfam" id="PF18146">
    <property type="entry name" value="CinA_KH"/>
    <property type="match status" value="1"/>
</dbReference>
<dbReference type="Pfam" id="PF00994">
    <property type="entry name" value="MoCF_biosynth"/>
    <property type="match status" value="1"/>
</dbReference>
<dbReference type="PIRSF" id="PIRSF006728">
    <property type="entry name" value="CinA"/>
    <property type="match status" value="1"/>
</dbReference>
<dbReference type="SMART" id="SM00852">
    <property type="entry name" value="MoCF_biosynth"/>
    <property type="match status" value="1"/>
</dbReference>
<dbReference type="SUPFAM" id="SSF142433">
    <property type="entry name" value="CinA-like"/>
    <property type="match status" value="1"/>
</dbReference>
<dbReference type="SUPFAM" id="SSF53218">
    <property type="entry name" value="Molybdenum cofactor biosynthesis proteins"/>
    <property type="match status" value="1"/>
</dbReference>
<gene>
    <name type="ordered locus">PCC8801_0814</name>
</gene>
<keyword id="KW-1185">Reference proteome</keyword>
<sequence>MSAEIICVGTELLLGDILNSNSQFLAKELARLGIPHYYQTVVGDNPSRLKQVIEIASNRASILIFTGGLGPTPDDLTTETIADFFNTPLVERPEIIEDMSRKFAARGRTMTDNNRKQALLPQGADILPNPLGTAPGLLWQPRPNLTLMTFPGVPSEMKRMWQETAIPYLKNQGWGKEIIFSRMLRFRGIGESALAAKVSQFFDLTNPTVAPYASLGEVRLRVSAKTRSEQEAIALIDPVAQELQKIAGLDYYGSDDETLASVVGSVLRQKGETVSVAESCTAGGLGSVLTSVAGSSDYFRGGIIAYDNSVKVDLLGVNSADLEQYGAVSDIVAQQMALGVKQRLGTDWGVSITGVAGPGGGTDTKPVGLVYVGLADSQGKVESFECRFGTERDREMVRSLSAYTALDHLRRKLLVR</sequence>
<proteinExistence type="inferred from homology"/>